<evidence type="ECO:0000250" key="1"/>
<evidence type="ECO:0000250" key="2">
    <source>
        <dbReference type="UniProtKB" id="P08174"/>
    </source>
</evidence>
<evidence type="ECO:0000255" key="3"/>
<evidence type="ECO:0000255" key="4">
    <source>
        <dbReference type="PROSITE-ProRule" id="PRU00302"/>
    </source>
</evidence>
<evidence type="ECO:0000256" key="5">
    <source>
        <dbReference type="SAM" id="MobiDB-lite"/>
    </source>
</evidence>
<evidence type="ECO:0000305" key="6"/>
<feature type="chain" id="PRO_0000006002" description="Complement decay-accelerating factor">
    <location>
        <begin position="1" status="less than"/>
        <end position="312"/>
    </location>
</feature>
<feature type="propeptide" id="PRO_0000006003" description="Removed in mature form" evidence="1">
    <location>
        <begin position="313"/>
        <end position="340"/>
    </location>
</feature>
<feature type="domain" description="Sushi 1" evidence="4">
    <location>
        <begin position="1" status="less than"/>
        <end position="55"/>
    </location>
</feature>
<feature type="domain" description="Sushi 2" evidence="4">
    <location>
        <begin position="56"/>
        <end position="119"/>
    </location>
</feature>
<feature type="domain" description="Sushi 3" evidence="4">
    <location>
        <begin position="120"/>
        <end position="181"/>
    </location>
</feature>
<feature type="domain" description="Sushi 4" evidence="4">
    <location>
        <begin position="182"/>
        <end position="244"/>
    </location>
</feature>
<feature type="region of interest" description="Disordered" evidence="5">
    <location>
        <begin position="235"/>
        <end position="317"/>
    </location>
</feature>
<feature type="compositionally biased region" description="Polar residues" evidence="5">
    <location>
        <begin position="246"/>
        <end position="268"/>
    </location>
</feature>
<feature type="compositionally biased region" description="Low complexity" evidence="5">
    <location>
        <begin position="269"/>
        <end position="287"/>
    </location>
</feature>
<feature type="compositionally biased region" description="Low complexity" evidence="5">
    <location>
        <begin position="307"/>
        <end position="317"/>
    </location>
</feature>
<feature type="lipid moiety-binding region" description="GPI-anchor amidated serine" evidence="1">
    <location>
        <position position="312"/>
    </location>
</feature>
<feature type="glycosylation site" description="N-linked (GlcNAc...) asparagine" evidence="3">
    <location>
        <position position="54"/>
    </location>
</feature>
<feature type="glycosylation site" description="N-linked (GlcNAc...) asparagine" evidence="3">
    <location>
        <position position="107"/>
    </location>
</feature>
<feature type="disulfide bond" evidence="4">
    <location>
        <begin position="24"/>
        <end position="53"/>
    </location>
</feature>
<feature type="disulfide bond" evidence="4">
    <location>
        <begin position="57"/>
        <end position="104"/>
    </location>
</feature>
<feature type="disulfide bond" evidence="4">
    <location>
        <begin position="88"/>
        <end position="117"/>
    </location>
</feature>
<feature type="disulfide bond" evidence="4">
    <location>
        <begin position="122"/>
        <end position="163"/>
    </location>
</feature>
<feature type="disulfide bond" evidence="4">
    <location>
        <begin position="149"/>
        <end position="179"/>
    </location>
</feature>
<feature type="disulfide bond" evidence="4">
    <location>
        <begin position="184"/>
        <end position="226"/>
    </location>
</feature>
<feature type="disulfide bond" evidence="4">
    <location>
        <begin position="212"/>
        <end position="242"/>
    </location>
</feature>
<feature type="non-terminal residue">
    <location>
        <position position="1"/>
    </location>
</feature>
<dbReference type="EMBL" id="S67775">
    <property type="protein sequence ID" value="AAC60609.1"/>
    <property type="molecule type" value="mRNA"/>
</dbReference>
<dbReference type="PIR" id="I56234">
    <property type="entry name" value="I56234"/>
</dbReference>
<dbReference type="SMR" id="P49457"/>
<dbReference type="GlyCosmos" id="P49457">
    <property type="glycosylation" value="2 sites, No reported glycans"/>
</dbReference>
<dbReference type="GO" id="GO:0005886">
    <property type="term" value="C:plasma membrane"/>
    <property type="evidence" value="ECO:0007669"/>
    <property type="project" value="UniProtKB-SubCell"/>
</dbReference>
<dbReference type="GO" id="GO:0098552">
    <property type="term" value="C:side of membrane"/>
    <property type="evidence" value="ECO:0007669"/>
    <property type="project" value="UniProtKB-KW"/>
</dbReference>
<dbReference type="GO" id="GO:0006958">
    <property type="term" value="P:complement activation, classical pathway"/>
    <property type="evidence" value="ECO:0007669"/>
    <property type="project" value="UniProtKB-KW"/>
</dbReference>
<dbReference type="GO" id="GO:0045087">
    <property type="term" value="P:innate immune response"/>
    <property type="evidence" value="ECO:0007669"/>
    <property type="project" value="UniProtKB-KW"/>
</dbReference>
<dbReference type="GO" id="GO:0045916">
    <property type="term" value="P:negative regulation of complement activation"/>
    <property type="evidence" value="ECO:0000250"/>
    <property type="project" value="UniProtKB"/>
</dbReference>
<dbReference type="CDD" id="cd00033">
    <property type="entry name" value="CCP"/>
    <property type="match status" value="3"/>
</dbReference>
<dbReference type="FunFam" id="2.10.70.10:FF:000078">
    <property type="entry name" value="Complement decay-accelerating factor"/>
    <property type="match status" value="1"/>
</dbReference>
<dbReference type="FunFam" id="2.10.70.10:FF:000079">
    <property type="entry name" value="Complement decay-accelerating factor"/>
    <property type="match status" value="1"/>
</dbReference>
<dbReference type="FunFam" id="2.10.70.10:FF:000055">
    <property type="entry name" value="Complement decay-accelerating factor, GPI-anchored"/>
    <property type="match status" value="1"/>
</dbReference>
<dbReference type="FunFam" id="2.10.70.10:FF:000008">
    <property type="entry name" value="Complement receptor type 1"/>
    <property type="match status" value="1"/>
</dbReference>
<dbReference type="Gene3D" id="2.10.70.10">
    <property type="entry name" value="Complement Module, domain 1"/>
    <property type="match status" value="4"/>
</dbReference>
<dbReference type="InterPro" id="IPR050350">
    <property type="entry name" value="Compl-Cell_Adhes-Reg"/>
</dbReference>
<dbReference type="InterPro" id="IPR035976">
    <property type="entry name" value="Sushi/SCR/CCP_sf"/>
</dbReference>
<dbReference type="InterPro" id="IPR000436">
    <property type="entry name" value="Sushi_SCR_CCP_dom"/>
</dbReference>
<dbReference type="PANTHER" id="PTHR19325">
    <property type="entry name" value="COMPLEMENT COMPONENT-RELATED SUSHI DOMAIN-CONTAINING"/>
    <property type="match status" value="1"/>
</dbReference>
<dbReference type="PANTHER" id="PTHR19325:SF317">
    <property type="entry name" value="COMPLEMENT DECAY-ACCELERATING FACTOR"/>
    <property type="match status" value="1"/>
</dbReference>
<dbReference type="Pfam" id="PF00084">
    <property type="entry name" value="Sushi"/>
    <property type="match status" value="4"/>
</dbReference>
<dbReference type="SMART" id="SM00032">
    <property type="entry name" value="CCP"/>
    <property type="match status" value="4"/>
</dbReference>
<dbReference type="SUPFAM" id="SSF57535">
    <property type="entry name" value="Complement control module/SCR domain"/>
    <property type="match status" value="4"/>
</dbReference>
<dbReference type="PROSITE" id="PS50923">
    <property type="entry name" value="SUSHI"/>
    <property type="match status" value="4"/>
</dbReference>
<keyword id="KW-0025">Alternative splicing</keyword>
<keyword id="KW-1003">Cell membrane</keyword>
<keyword id="KW-0180">Complement pathway</keyword>
<keyword id="KW-1015">Disulfide bond</keyword>
<keyword id="KW-0325">Glycoprotein</keyword>
<keyword id="KW-0336">GPI-anchor</keyword>
<keyword id="KW-0391">Immunity</keyword>
<keyword id="KW-0399">Innate immunity</keyword>
<keyword id="KW-0449">Lipoprotein</keyword>
<keyword id="KW-0472">Membrane</keyword>
<keyword id="KW-0677">Repeat</keyword>
<keyword id="KW-0768">Sushi</keyword>
<organism>
    <name type="scientific">Pongo pygmaeus</name>
    <name type="common">Bornean orangutan</name>
    <dbReference type="NCBI Taxonomy" id="9600"/>
    <lineage>
        <taxon>Eukaryota</taxon>
        <taxon>Metazoa</taxon>
        <taxon>Chordata</taxon>
        <taxon>Craniata</taxon>
        <taxon>Vertebrata</taxon>
        <taxon>Euteleostomi</taxon>
        <taxon>Mammalia</taxon>
        <taxon>Eutheria</taxon>
        <taxon>Euarchontoglires</taxon>
        <taxon>Primates</taxon>
        <taxon>Haplorrhini</taxon>
        <taxon>Catarrhini</taxon>
        <taxon>Hominidae</taxon>
        <taxon>Pongo</taxon>
    </lineage>
</organism>
<reference key="1">
    <citation type="journal article" date="1994" name="J. Immunol.">
        <title>Characterization of DAF-2, a high molecular weight form of decay-accelerating factor (DAF; CD55), as a covalently cross-linked dimer of DAF-1.</title>
        <authorList>
            <person name="Nickells M.W."/>
            <person name="Alvarez J.I."/>
            <person name="Lublin D.M."/>
            <person name="Atkinson J.P."/>
        </authorList>
    </citation>
    <scope>NUCLEOTIDE SEQUENCE [MRNA]</scope>
</reference>
<protein>
    <recommendedName>
        <fullName>Complement decay-accelerating factor</fullName>
    </recommendedName>
    <cdAntigenName>CD55</cdAntigenName>
</protein>
<accession>P49457</accession>
<proteinExistence type="evidence at transcript level"/>
<gene>
    <name type="primary">CD55</name>
    <name type="synonym">DAF</name>
</gene>
<name>DAF_PONPY</name>
<sequence>VPNAQPALEGRTSFPEDTVVTYKCEESFMKIPGKKDSVICLKGSQWSDIEEFCNRSCEVPTRLNFASLKQPYITQNYFPVGTTVEYVCRPGYRRELSLSTKLTCLQNLTWSTAVEFCKKKSCPNPGEIRNGQIDVSNGILFGATISFSCNTGYKLFGPTSSLCLISGSSVQWSDPLPECREIYCPAPPQIDNGIIQGKRDHYGYRQSITYACNKGYTMIGEHSIYCTVNDDEGEWSGPPPECRGKSLTSKVPPTVQKPTTVNVPTTEVSPTSQKTTTKTTTPNAQATRSTPVSRTTKHFHETTPNKGSGTTSGTTSLLSGHKCFTLTGLLGTLVTMGLLT</sequence>
<comment type="function">
    <text evidence="2">This protein recognizes C4b and C3b fragments that condense with cell-surface hydroxyl or amino groups when nascent C4b and C3b are locally generated during C4 and c3 activation. Interaction of daf with cell-associated C4b and C3b polypeptides interferes with their ability to catalyze the conversion of C2 and factor B to enzymatically active C2a and Bb and thereby prevents the formation of C4b2a and C3bBb, the amplification convertases of the complement cascade. Inhibits complement activation by destabilizing and preventing the formation of C3 and C5 convertases, which prevents complement damage.</text>
</comment>
<comment type="subunit">
    <text evidence="2">Monomer (major form) and non-disulfide-linked, covalent homodimer (minor form). Interacts with ADGRE5.</text>
</comment>
<comment type="subcellular location">
    <subcellularLocation>
        <location>Cell membrane</location>
        <topology>Lipid-anchor</topology>
        <topology>GPI-anchor</topology>
    </subcellularLocation>
</comment>
<comment type="alternative products">
    <event type="alternative splicing"/>
    <isoform>
        <id>P49457-1</id>
        <name>DAF-2</name>
        <sequence type="displayed"/>
    </isoform>
    <isoform>
        <id>P49457-2</id>
        <name>DAF-1</name>
        <sequence type="not described"/>
    </isoform>
</comment>
<comment type="domain">
    <text evidence="1">The first Sushi domain (SCR1) is not necessary for function. SCR2 and SCR4 provide the proper conformation for the active site on SCR3 (By similarity).</text>
</comment>
<comment type="PTM">
    <text>The Ser/Thr-rich domain is heavily O-glycosylated.</text>
</comment>
<comment type="similarity">
    <text evidence="6">Belongs to the receptors of complement activation (RCA) family.</text>
</comment>